<keyword id="KW-1185">Reference proteome</keyword>
<reference key="1">
    <citation type="journal article" date="2001" name="Nature">
        <title>Genome sequence of enterohaemorrhagic Escherichia coli O157:H7.</title>
        <authorList>
            <person name="Perna N.T."/>
            <person name="Plunkett G. III"/>
            <person name="Burland V."/>
            <person name="Mau B."/>
            <person name="Glasner J.D."/>
            <person name="Rose D.J."/>
            <person name="Mayhew G.F."/>
            <person name="Evans P.S."/>
            <person name="Gregor J."/>
            <person name="Kirkpatrick H.A."/>
            <person name="Posfai G."/>
            <person name="Hackett J."/>
            <person name="Klink S."/>
            <person name="Boutin A."/>
            <person name="Shao Y."/>
            <person name="Miller L."/>
            <person name="Grotbeck E.J."/>
            <person name="Davis N.W."/>
            <person name="Lim A."/>
            <person name="Dimalanta E.T."/>
            <person name="Potamousis K."/>
            <person name="Apodaca J."/>
            <person name="Anantharaman T.S."/>
            <person name="Lin J."/>
            <person name="Yen G."/>
            <person name="Schwartz D.C."/>
            <person name="Welch R.A."/>
            <person name="Blattner F.R."/>
        </authorList>
    </citation>
    <scope>NUCLEOTIDE SEQUENCE [LARGE SCALE GENOMIC DNA]</scope>
    <source>
        <strain>O157:H7 / EDL933 / ATCC 700927 / EHEC</strain>
    </source>
</reference>
<reference key="2">
    <citation type="journal article" date="2001" name="DNA Res.">
        <title>Complete genome sequence of enterohemorrhagic Escherichia coli O157:H7 and genomic comparison with a laboratory strain K-12.</title>
        <authorList>
            <person name="Hayashi T."/>
            <person name="Makino K."/>
            <person name="Ohnishi M."/>
            <person name="Kurokawa K."/>
            <person name="Ishii K."/>
            <person name="Yokoyama K."/>
            <person name="Han C.-G."/>
            <person name="Ohtsubo E."/>
            <person name="Nakayama K."/>
            <person name="Murata T."/>
            <person name="Tanaka M."/>
            <person name="Tobe T."/>
            <person name="Iida T."/>
            <person name="Takami H."/>
            <person name="Honda T."/>
            <person name="Sasakawa C."/>
            <person name="Ogasawara N."/>
            <person name="Yasunaga T."/>
            <person name="Kuhara S."/>
            <person name="Shiba T."/>
            <person name="Hattori M."/>
            <person name="Shinagawa H."/>
        </authorList>
    </citation>
    <scope>NUCLEOTIDE SEQUENCE [LARGE SCALE GENOMIC DNA]</scope>
    <source>
        <strain>O157:H7 / Sakai / RIMD 0509952 / EHEC</strain>
    </source>
</reference>
<accession>P0AF51</accession>
<accession>P32699</accession>
<feature type="chain" id="PRO_0000169716" description="Uncharacterized protein YjbR">
    <location>
        <begin position="1"/>
        <end position="118"/>
    </location>
</feature>
<organism>
    <name type="scientific">Escherichia coli O157:H7</name>
    <dbReference type="NCBI Taxonomy" id="83334"/>
    <lineage>
        <taxon>Bacteria</taxon>
        <taxon>Pseudomonadati</taxon>
        <taxon>Pseudomonadota</taxon>
        <taxon>Gammaproteobacteria</taxon>
        <taxon>Enterobacterales</taxon>
        <taxon>Enterobacteriaceae</taxon>
        <taxon>Escherichia</taxon>
    </lineage>
</organism>
<gene>
    <name type="primary">yjbR</name>
    <name type="ordered locus">Z5656</name>
    <name type="ordered locus">ECs5039</name>
</gene>
<proteinExistence type="predicted"/>
<protein>
    <recommendedName>
        <fullName>Uncharacterized protein YjbR</fullName>
    </recommendedName>
</protein>
<sequence length="118" mass="13519">MTISELLQYCMAKPGAEQSVHNDWKATQIKVEDVLFAMVKEVENRPAVSLKTSPELAELLRQQHSDVRPSRHLNKAHWSTVYLDGSLPDSQIYYLVDASYQQAVNLLPEEKRKLLVQL</sequence>
<name>YJBR_ECO57</name>
<dbReference type="EMBL" id="AE005174">
    <property type="protein sequence ID" value="AAG59255.1"/>
    <property type="molecule type" value="Genomic_DNA"/>
</dbReference>
<dbReference type="EMBL" id="BA000007">
    <property type="protein sequence ID" value="BAB38462.1"/>
    <property type="molecule type" value="Genomic_DNA"/>
</dbReference>
<dbReference type="PIR" id="C86099">
    <property type="entry name" value="C86099"/>
</dbReference>
<dbReference type="PIR" id="G91258">
    <property type="entry name" value="G91258"/>
</dbReference>
<dbReference type="RefSeq" id="NP_313066.1">
    <property type="nucleotide sequence ID" value="NC_002695.1"/>
</dbReference>
<dbReference type="RefSeq" id="WP_000155657.1">
    <property type="nucleotide sequence ID" value="NZ_VOAI01000008.1"/>
</dbReference>
<dbReference type="BMRB" id="P0AF51"/>
<dbReference type="SMR" id="P0AF51"/>
<dbReference type="STRING" id="155864.Z5656"/>
<dbReference type="GeneID" id="914296"/>
<dbReference type="KEGG" id="ece:Z5656"/>
<dbReference type="KEGG" id="ecs:ECs_5039"/>
<dbReference type="PATRIC" id="fig|386585.9.peg.5262"/>
<dbReference type="eggNOG" id="COG2315">
    <property type="taxonomic scope" value="Bacteria"/>
</dbReference>
<dbReference type="HOGENOM" id="CLU_105851_1_2_6"/>
<dbReference type="OMA" id="KVFAWIF"/>
<dbReference type="Proteomes" id="UP000000558">
    <property type="component" value="Chromosome"/>
</dbReference>
<dbReference type="Proteomes" id="UP000002519">
    <property type="component" value="Chromosome"/>
</dbReference>
<dbReference type="Gene3D" id="3.90.1150.30">
    <property type="match status" value="1"/>
</dbReference>
<dbReference type="InterPro" id="IPR007351">
    <property type="entry name" value="YjbR"/>
</dbReference>
<dbReference type="InterPro" id="IPR038056">
    <property type="entry name" value="YjbR-like_sf"/>
</dbReference>
<dbReference type="PANTHER" id="PTHR35145:SF3">
    <property type="entry name" value="CYTOPLASMIC PROTEIN"/>
    <property type="match status" value="1"/>
</dbReference>
<dbReference type="PANTHER" id="PTHR35145">
    <property type="entry name" value="CYTOPLASMIC PROTEIN-RELATED"/>
    <property type="match status" value="1"/>
</dbReference>
<dbReference type="Pfam" id="PF04237">
    <property type="entry name" value="YjbR"/>
    <property type="match status" value="1"/>
</dbReference>
<dbReference type="SUPFAM" id="SSF142906">
    <property type="entry name" value="YjbR-like"/>
    <property type="match status" value="1"/>
</dbReference>